<feature type="chain" id="PRO_0000355694" description="Large ribosomal subunit protein uL24">
    <location>
        <begin position="1"/>
        <end position="106"/>
    </location>
</feature>
<feature type="region of interest" description="Disordered" evidence="2">
    <location>
        <begin position="1"/>
        <end position="20"/>
    </location>
</feature>
<feature type="compositionally biased region" description="Basic and acidic residues" evidence="2">
    <location>
        <begin position="8"/>
        <end position="20"/>
    </location>
</feature>
<sequence length="106" mass="11925">MNKRAKSKNREPLRKSPVKRGDEVVVITGSERGKRGKVLKVLRNTHKVIVEGIKMVKKAVRPSQDNPKGGIVEKEATIAISNVMLASKWEKRQEKKKVAVEKKEQG</sequence>
<name>RL24_METI4</name>
<comment type="function">
    <text evidence="1">One of two assembly initiator proteins, it binds directly to the 5'-end of the 23S rRNA, where it nucleates assembly of the 50S subunit.</text>
</comment>
<comment type="function">
    <text evidence="1">One of the proteins that surrounds the polypeptide exit tunnel on the outside of the subunit.</text>
</comment>
<comment type="subunit">
    <text evidence="1">Part of the 50S ribosomal subunit.</text>
</comment>
<comment type="similarity">
    <text evidence="1">Belongs to the universal ribosomal protein uL24 family.</text>
</comment>
<reference key="1">
    <citation type="journal article" date="2008" name="Biol. Direct">
        <title>Complete genome sequence of the extremely acidophilic methanotroph isolate V4, Methylacidiphilum infernorum, a representative of the bacterial phylum Verrucomicrobia.</title>
        <authorList>
            <person name="Hou S."/>
            <person name="Makarova K.S."/>
            <person name="Saw J.H."/>
            <person name="Senin P."/>
            <person name="Ly B.V."/>
            <person name="Zhou Z."/>
            <person name="Ren Y."/>
            <person name="Wang J."/>
            <person name="Galperin M.Y."/>
            <person name="Omelchenko M.V."/>
            <person name="Wolf Y.I."/>
            <person name="Yutin N."/>
            <person name="Koonin E.V."/>
            <person name="Stott M.B."/>
            <person name="Mountain B.W."/>
            <person name="Crowe M.A."/>
            <person name="Smirnova A.V."/>
            <person name="Dunfield P.F."/>
            <person name="Feng L."/>
            <person name="Wang L."/>
            <person name="Alam M."/>
        </authorList>
    </citation>
    <scope>NUCLEOTIDE SEQUENCE [LARGE SCALE GENOMIC DNA]</scope>
    <source>
        <strain>Isolate V4</strain>
    </source>
</reference>
<gene>
    <name evidence="1" type="primary">rplX</name>
    <name type="ordered locus">Minf_0694</name>
</gene>
<protein>
    <recommendedName>
        <fullName evidence="1">Large ribosomal subunit protein uL24</fullName>
    </recommendedName>
    <alternativeName>
        <fullName evidence="3">50S ribosomal protein L24</fullName>
    </alternativeName>
</protein>
<proteinExistence type="inferred from homology"/>
<keyword id="KW-0687">Ribonucleoprotein</keyword>
<keyword id="KW-0689">Ribosomal protein</keyword>
<keyword id="KW-0694">RNA-binding</keyword>
<keyword id="KW-0699">rRNA-binding</keyword>
<organism>
    <name type="scientific">Methylacidiphilum infernorum (isolate V4)</name>
    <name type="common">Methylokorus infernorum (strain V4)</name>
    <dbReference type="NCBI Taxonomy" id="481448"/>
    <lineage>
        <taxon>Bacteria</taxon>
        <taxon>Pseudomonadati</taxon>
        <taxon>Verrucomicrobiota</taxon>
        <taxon>Methylacidiphilae</taxon>
        <taxon>Methylacidiphilales</taxon>
        <taxon>Methylacidiphilaceae</taxon>
        <taxon>Methylacidiphilum (ex Ratnadevi et al. 2023)</taxon>
    </lineage>
</organism>
<dbReference type="EMBL" id="CP000975">
    <property type="protein sequence ID" value="ACD82749.1"/>
    <property type="molecule type" value="Genomic_DNA"/>
</dbReference>
<dbReference type="RefSeq" id="WP_012463031.1">
    <property type="nucleotide sequence ID" value="NC_010794.1"/>
</dbReference>
<dbReference type="SMR" id="B3E0J5"/>
<dbReference type="STRING" id="481448.Minf_0694"/>
<dbReference type="KEGG" id="min:Minf_0694"/>
<dbReference type="eggNOG" id="COG0198">
    <property type="taxonomic scope" value="Bacteria"/>
</dbReference>
<dbReference type="HOGENOM" id="CLU_093315_2_2_0"/>
<dbReference type="OrthoDB" id="9807419at2"/>
<dbReference type="Proteomes" id="UP000009149">
    <property type="component" value="Chromosome"/>
</dbReference>
<dbReference type="GO" id="GO:1990904">
    <property type="term" value="C:ribonucleoprotein complex"/>
    <property type="evidence" value="ECO:0007669"/>
    <property type="project" value="UniProtKB-KW"/>
</dbReference>
<dbReference type="GO" id="GO:0005840">
    <property type="term" value="C:ribosome"/>
    <property type="evidence" value="ECO:0007669"/>
    <property type="project" value="UniProtKB-KW"/>
</dbReference>
<dbReference type="GO" id="GO:0019843">
    <property type="term" value="F:rRNA binding"/>
    <property type="evidence" value="ECO:0007669"/>
    <property type="project" value="UniProtKB-UniRule"/>
</dbReference>
<dbReference type="GO" id="GO:0003735">
    <property type="term" value="F:structural constituent of ribosome"/>
    <property type="evidence" value="ECO:0007669"/>
    <property type="project" value="InterPro"/>
</dbReference>
<dbReference type="GO" id="GO:0006412">
    <property type="term" value="P:translation"/>
    <property type="evidence" value="ECO:0007669"/>
    <property type="project" value="UniProtKB-UniRule"/>
</dbReference>
<dbReference type="CDD" id="cd06089">
    <property type="entry name" value="KOW_RPL26"/>
    <property type="match status" value="1"/>
</dbReference>
<dbReference type="Gene3D" id="2.30.30.30">
    <property type="match status" value="1"/>
</dbReference>
<dbReference type="HAMAP" id="MF_01326_B">
    <property type="entry name" value="Ribosomal_uL24_B"/>
    <property type="match status" value="1"/>
</dbReference>
<dbReference type="InterPro" id="IPR005824">
    <property type="entry name" value="KOW"/>
</dbReference>
<dbReference type="InterPro" id="IPR014722">
    <property type="entry name" value="Rib_uL2_dom2"/>
</dbReference>
<dbReference type="InterPro" id="IPR003256">
    <property type="entry name" value="Ribosomal_uL24"/>
</dbReference>
<dbReference type="InterPro" id="IPR005825">
    <property type="entry name" value="Ribosomal_uL24_CS"/>
</dbReference>
<dbReference type="InterPro" id="IPR041988">
    <property type="entry name" value="Ribosomal_uL24_KOW"/>
</dbReference>
<dbReference type="InterPro" id="IPR008991">
    <property type="entry name" value="Translation_prot_SH3-like_sf"/>
</dbReference>
<dbReference type="NCBIfam" id="TIGR01079">
    <property type="entry name" value="rplX_bact"/>
    <property type="match status" value="1"/>
</dbReference>
<dbReference type="PANTHER" id="PTHR12903">
    <property type="entry name" value="MITOCHONDRIAL RIBOSOMAL PROTEIN L24"/>
    <property type="match status" value="1"/>
</dbReference>
<dbReference type="Pfam" id="PF00467">
    <property type="entry name" value="KOW"/>
    <property type="match status" value="1"/>
</dbReference>
<dbReference type="Pfam" id="PF17136">
    <property type="entry name" value="ribosomal_L24"/>
    <property type="match status" value="1"/>
</dbReference>
<dbReference type="SMART" id="SM00739">
    <property type="entry name" value="KOW"/>
    <property type="match status" value="1"/>
</dbReference>
<dbReference type="SUPFAM" id="SSF50104">
    <property type="entry name" value="Translation proteins SH3-like domain"/>
    <property type="match status" value="1"/>
</dbReference>
<dbReference type="PROSITE" id="PS01108">
    <property type="entry name" value="RIBOSOMAL_L24"/>
    <property type="match status" value="1"/>
</dbReference>
<evidence type="ECO:0000255" key="1">
    <source>
        <dbReference type="HAMAP-Rule" id="MF_01326"/>
    </source>
</evidence>
<evidence type="ECO:0000256" key="2">
    <source>
        <dbReference type="SAM" id="MobiDB-lite"/>
    </source>
</evidence>
<evidence type="ECO:0000305" key="3"/>
<accession>B3E0J5</accession>